<accession>P35132</accession>
<accession>Q42014</accession>
<accession>Q4TZ01</accession>
<accession>Q8RXQ0</accession>
<accession>Q9FPH9</accession>
<feature type="chain" id="PRO_0000082577" description="SUMO-conjugating enzyme UBC9">
    <location>
        <begin position="1"/>
        <end position="148"/>
    </location>
</feature>
<feature type="domain" description="UBC core" evidence="1">
    <location>
        <begin position="1"/>
        <end position="147"/>
    </location>
</feature>
<feature type="active site" description="Glycyl thioester intermediate" evidence="1 2">
    <location>
        <position position="85"/>
    </location>
</feature>
<feature type="splice variant" id="VSP_008896" description="In isoform 2." evidence="6 7">
    <original>M</original>
    <variation>MFFFFLIHLTIGLVFDCRVFNWNLDSGILEM</variation>
    <location>
        <position position="1"/>
    </location>
</feature>
<feature type="sequence conflict" description="In Ref. 6; AAL85988." evidence="8" ref="6">
    <original>P</original>
    <variation>H</variation>
    <location>
        <position position="65"/>
    </location>
</feature>
<sequence>MASKRILKELKDLQKDPPTSCSAGPVAEDMFHWQATIMGPSDSPYSGGVFLVTIHFPPDYPFKPPKVAFRTKVFHPNINSNGSICLDILKEQWSPALTISKVLLSICSLLTDPNPDDPLVPEIAHMYKTDKNKYESTARTWTQKYAMG</sequence>
<reference key="1">
    <citation type="journal article" date="1993" name="Plant J.">
        <title>Homologs of the essential ubiquitin conjugating enzymes UBC1, 4, and 5 in yeast are encoded by a multigene family in Arabidopsis thaliana.</title>
        <authorList>
            <person name="Girod P.-A."/>
            <person name="Carpenter T.B."/>
            <person name="van Nocker S."/>
            <person name="Sullivan M.L."/>
            <person name="Vierstra R.D."/>
        </authorList>
    </citation>
    <scope>NUCLEOTIDE SEQUENCE [MRNA] (ISOFORM 1)</scope>
    <source>
        <strain>cv. Columbia</strain>
        <tissue>Leaf</tissue>
    </source>
</reference>
<reference key="2">
    <citation type="journal article" date="1994" name="Mol. Gen. Genet.">
        <title>Differential expression of several E2-type ubiquitin carrier protein genes at different developmental stages in Arabidopsis thaliana and Nicotiana sylvestris.</title>
        <authorList>
            <person name="Genschik P."/>
            <person name="Durr A."/>
            <person name="Fleck J."/>
        </authorList>
    </citation>
    <scope>NUCLEOTIDE SEQUENCE [MRNA] (ISOFORM 1)</scope>
    <scope>DEVELOPMENTAL STAGE</scope>
    <scope>INDUCTION</scope>
    <source>
        <strain>cv. Columbia</strain>
    </source>
</reference>
<reference key="3">
    <citation type="journal article" date="2005" name="Plant Physiol.">
        <title>Genome analysis and functional characterization of the E2 and RING-type E3 ligase ubiquitination enzymes of Arabidopsis.</title>
        <authorList>
            <person name="Kraft E."/>
            <person name="Stone S.L."/>
            <person name="Ma L."/>
            <person name="Su N."/>
            <person name="Gao Y."/>
            <person name="Lau O.-S."/>
            <person name="Deng X.-W."/>
            <person name="Callis J."/>
        </authorList>
    </citation>
    <scope>NUCLEOTIDE SEQUENCE [MRNA] (ISOFORM 2)</scope>
    <scope>TISSUE SPECIFICITY</scope>
    <scope>GENE FAMILY</scope>
    <scope>NOMENCLATURE</scope>
</reference>
<reference key="4">
    <citation type="journal article" date="1999" name="Nature">
        <title>Sequence and analysis of chromosome 4 of the plant Arabidopsis thaliana.</title>
        <authorList>
            <person name="Mayer K.F.X."/>
            <person name="Schueller C."/>
            <person name="Wambutt R."/>
            <person name="Murphy G."/>
            <person name="Volckaert G."/>
            <person name="Pohl T."/>
            <person name="Duesterhoeft A."/>
            <person name="Stiekema W."/>
            <person name="Entian K.-D."/>
            <person name="Terryn N."/>
            <person name="Harris B."/>
            <person name="Ansorge W."/>
            <person name="Brandt P."/>
            <person name="Grivell L.A."/>
            <person name="Rieger M."/>
            <person name="Weichselgartner M."/>
            <person name="de Simone V."/>
            <person name="Obermaier B."/>
            <person name="Mache R."/>
            <person name="Mueller M."/>
            <person name="Kreis M."/>
            <person name="Delseny M."/>
            <person name="Puigdomenech P."/>
            <person name="Watson M."/>
            <person name="Schmidtheini T."/>
            <person name="Reichert B."/>
            <person name="Portetelle D."/>
            <person name="Perez-Alonso M."/>
            <person name="Boutry M."/>
            <person name="Bancroft I."/>
            <person name="Vos P."/>
            <person name="Hoheisel J."/>
            <person name="Zimmermann W."/>
            <person name="Wedler H."/>
            <person name="Ridley P."/>
            <person name="Langham S.-A."/>
            <person name="McCullagh B."/>
            <person name="Bilham L."/>
            <person name="Robben J."/>
            <person name="van der Schueren J."/>
            <person name="Grymonprez B."/>
            <person name="Chuang Y.-J."/>
            <person name="Vandenbussche F."/>
            <person name="Braeken M."/>
            <person name="Weltjens I."/>
            <person name="Voet M."/>
            <person name="Bastiaens I."/>
            <person name="Aert R."/>
            <person name="Defoor E."/>
            <person name="Weitzenegger T."/>
            <person name="Bothe G."/>
            <person name="Ramsperger U."/>
            <person name="Hilbert H."/>
            <person name="Braun M."/>
            <person name="Holzer E."/>
            <person name="Brandt A."/>
            <person name="Peters S."/>
            <person name="van Staveren M."/>
            <person name="Dirkse W."/>
            <person name="Mooijman P."/>
            <person name="Klein Lankhorst R."/>
            <person name="Rose M."/>
            <person name="Hauf J."/>
            <person name="Koetter P."/>
            <person name="Berneiser S."/>
            <person name="Hempel S."/>
            <person name="Feldpausch M."/>
            <person name="Lamberth S."/>
            <person name="Van den Daele H."/>
            <person name="De Keyser A."/>
            <person name="Buysshaert C."/>
            <person name="Gielen J."/>
            <person name="Villarroel R."/>
            <person name="De Clercq R."/>
            <person name="van Montagu M."/>
            <person name="Rogers J."/>
            <person name="Cronin A."/>
            <person name="Quail M.A."/>
            <person name="Bray-Allen S."/>
            <person name="Clark L."/>
            <person name="Doggett J."/>
            <person name="Hall S."/>
            <person name="Kay M."/>
            <person name="Lennard N."/>
            <person name="McLay K."/>
            <person name="Mayes R."/>
            <person name="Pettett A."/>
            <person name="Rajandream M.A."/>
            <person name="Lyne M."/>
            <person name="Benes V."/>
            <person name="Rechmann S."/>
            <person name="Borkova D."/>
            <person name="Bloecker H."/>
            <person name="Scharfe M."/>
            <person name="Grimm M."/>
            <person name="Loehnert T.-H."/>
            <person name="Dose S."/>
            <person name="de Haan M."/>
            <person name="Maarse A.C."/>
            <person name="Schaefer M."/>
            <person name="Mueller-Auer S."/>
            <person name="Gabel C."/>
            <person name="Fuchs M."/>
            <person name="Fartmann B."/>
            <person name="Granderath K."/>
            <person name="Dauner D."/>
            <person name="Herzl A."/>
            <person name="Neumann S."/>
            <person name="Argiriou A."/>
            <person name="Vitale D."/>
            <person name="Liguori R."/>
            <person name="Piravandi E."/>
            <person name="Massenet O."/>
            <person name="Quigley F."/>
            <person name="Clabauld G."/>
            <person name="Muendlein A."/>
            <person name="Felber R."/>
            <person name="Schnabl S."/>
            <person name="Hiller R."/>
            <person name="Schmidt W."/>
            <person name="Lecharny A."/>
            <person name="Aubourg S."/>
            <person name="Chefdor F."/>
            <person name="Cooke R."/>
            <person name="Berger C."/>
            <person name="Monfort A."/>
            <person name="Casacuberta E."/>
            <person name="Gibbons T."/>
            <person name="Weber N."/>
            <person name="Vandenbol M."/>
            <person name="Bargues M."/>
            <person name="Terol J."/>
            <person name="Torres A."/>
            <person name="Perez-Perez A."/>
            <person name="Purnelle B."/>
            <person name="Bent E."/>
            <person name="Johnson S."/>
            <person name="Tacon D."/>
            <person name="Jesse T."/>
            <person name="Heijnen L."/>
            <person name="Schwarz S."/>
            <person name="Scholler P."/>
            <person name="Heber S."/>
            <person name="Francs P."/>
            <person name="Bielke C."/>
            <person name="Frishman D."/>
            <person name="Haase D."/>
            <person name="Lemcke K."/>
            <person name="Mewes H.-W."/>
            <person name="Stocker S."/>
            <person name="Zaccaria P."/>
            <person name="Bevan M."/>
            <person name="Wilson R.K."/>
            <person name="de la Bastide M."/>
            <person name="Habermann K."/>
            <person name="Parnell L."/>
            <person name="Dedhia N."/>
            <person name="Gnoj L."/>
            <person name="Schutz K."/>
            <person name="Huang E."/>
            <person name="Spiegel L."/>
            <person name="Sekhon M."/>
            <person name="Murray J."/>
            <person name="Sheet P."/>
            <person name="Cordes M."/>
            <person name="Abu-Threideh J."/>
            <person name="Stoneking T."/>
            <person name="Kalicki J."/>
            <person name="Graves T."/>
            <person name="Harmon G."/>
            <person name="Edwards J."/>
            <person name="Latreille P."/>
            <person name="Courtney L."/>
            <person name="Cloud J."/>
            <person name="Abbott A."/>
            <person name="Scott K."/>
            <person name="Johnson D."/>
            <person name="Minx P."/>
            <person name="Bentley D."/>
            <person name="Fulton B."/>
            <person name="Miller N."/>
            <person name="Greco T."/>
            <person name="Kemp K."/>
            <person name="Kramer J."/>
            <person name="Fulton L."/>
            <person name="Mardis E."/>
            <person name="Dante M."/>
            <person name="Pepin K."/>
            <person name="Hillier L.W."/>
            <person name="Nelson J."/>
            <person name="Spieth J."/>
            <person name="Ryan E."/>
            <person name="Andrews S."/>
            <person name="Geisel C."/>
            <person name="Layman D."/>
            <person name="Du H."/>
            <person name="Ali J."/>
            <person name="Berghoff A."/>
            <person name="Jones K."/>
            <person name="Drone K."/>
            <person name="Cotton M."/>
            <person name="Joshu C."/>
            <person name="Antonoiu B."/>
            <person name="Zidanic M."/>
            <person name="Strong C."/>
            <person name="Sun H."/>
            <person name="Lamar B."/>
            <person name="Yordan C."/>
            <person name="Ma P."/>
            <person name="Zhong J."/>
            <person name="Preston R."/>
            <person name="Vil D."/>
            <person name="Shekher M."/>
            <person name="Matero A."/>
            <person name="Shah R."/>
            <person name="Swaby I.K."/>
            <person name="O'Shaughnessy A."/>
            <person name="Rodriguez M."/>
            <person name="Hoffman J."/>
            <person name="Till S."/>
            <person name="Granat S."/>
            <person name="Shohdy N."/>
            <person name="Hasegawa A."/>
            <person name="Hameed A."/>
            <person name="Lodhi M."/>
            <person name="Johnson A."/>
            <person name="Chen E."/>
            <person name="Marra M.A."/>
            <person name="Martienssen R."/>
            <person name="McCombie W.R."/>
        </authorList>
    </citation>
    <scope>NUCLEOTIDE SEQUENCE [LARGE SCALE GENOMIC DNA]</scope>
    <source>
        <strain>cv. Columbia</strain>
    </source>
</reference>
<reference key="5">
    <citation type="journal article" date="2017" name="Plant J.">
        <title>Araport11: a complete reannotation of the Arabidopsis thaliana reference genome.</title>
        <authorList>
            <person name="Cheng C.Y."/>
            <person name="Krishnakumar V."/>
            <person name="Chan A.P."/>
            <person name="Thibaud-Nissen F."/>
            <person name="Schobel S."/>
            <person name="Town C.D."/>
        </authorList>
    </citation>
    <scope>GENOME REANNOTATION</scope>
    <source>
        <strain>cv. Columbia</strain>
    </source>
</reference>
<reference key="6">
    <citation type="journal article" date="2003" name="Science">
        <title>Empirical analysis of transcriptional activity in the Arabidopsis genome.</title>
        <authorList>
            <person name="Yamada K."/>
            <person name="Lim J."/>
            <person name="Dale J.M."/>
            <person name="Chen H."/>
            <person name="Shinn P."/>
            <person name="Palm C.J."/>
            <person name="Southwick A.M."/>
            <person name="Wu H.C."/>
            <person name="Kim C.J."/>
            <person name="Nguyen M."/>
            <person name="Pham P.K."/>
            <person name="Cheuk R.F."/>
            <person name="Karlin-Newmann G."/>
            <person name="Liu S.X."/>
            <person name="Lam B."/>
            <person name="Sakano H."/>
            <person name="Wu T."/>
            <person name="Yu G."/>
            <person name="Miranda M."/>
            <person name="Quach H.L."/>
            <person name="Tripp M."/>
            <person name="Chang C.H."/>
            <person name="Lee J.M."/>
            <person name="Toriumi M.J."/>
            <person name="Chan M.M."/>
            <person name="Tang C.C."/>
            <person name="Onodera C.S."/>
            <person name="Deng J.M."/>
            <person name="Akiyama K."/>
            <person name="Ansari Y."/>
            <person name="Arakawa T."/>
            <person name="Banh J."/>
            <person name="Banno F."/>
            <person name="Bowser L."/>
            <person name="Brooks S.Y."/>
            <person name="Carninci P."/>
            <person name="Chao Q."/>
            <person name="Choy N."/>
            <person name="Enju A."/>
            <person name="Goldsmith A.D."/>
            <person name="Gurjal M."/>
            <person name="Hansen N.F."/>
            <person name="Hayashizaki Y."/>
            <person name="Johnson-Hopson C."/>
            <person name="Hsuan V.W."/>
            <person name="Iida K."/>
            <person name="Karnes M."/>
            <person name="Khan S."/>
            <person name="Koesema E."/>
            <person name="Ishida J."/>
            <person name="Jiang P.X."/>
            <person name="Jones T."/>
            <person name="Kawai J."/>
            <person name="Kamiya A."/>
            <person name="Meyers C."/>
            <person name="Nakajima M."/>
            <person name="Narusaka M."/>
            <person name="Seki M."/>
            <person name="Sakurai T."/>
            <person name="Satou M."/>
            <person name="Tamse R."/>
            <person name="Vaysberg M."/>
            <person name="Wallender E.K."/>
            <person name="Wong C."/>
            <person name="Yamamura Y."/>
            <person name="Yuan S."/>
            <person name="Shinozaki K."/>
            <person name="Davis R.W."/>
            <person name="Theologis A."/>
            <person name="Ecker J.R."/>
        </authorList>
    </citation>
    <scope>NUCLEOTIDE SEQUENCE [LARGE SCALE MRNA] (ISOFORMS 1 AND 2)</scope>
    <source>
        <strain>cv. Columbia</strain>
    </source>
</reference>
<reference key="7">
    <citation type="journal article" date="1993" name="Plant J.">
        <title>An inventory of 1152 expressed sequence tags obtained by partial sequencing of cDNAs from Arabidopsis thaliana.</title>
        <authorList>
            <person name="Hoefte H."/>
            <person name="Desprez T."/>
            <person name="Amselem J."/>
            <person name="Chiapello H."/>
            <person name="Rouze P."/>
            <person name="Caboche M."/>
            <person name="Moisan A."/>
            <person name="Jourjon M.-F."/>
            <person name="Charpenteau J.-L."/>
            <person name="Berthomieu P."/>
            <person name="Guerrier D."/>
            <person name="Giraudat J."/>
            <person name="Quigley F."/>
            <person name="Thomas F."/>
            <person name="Yu D.-Y."/>
            <person name="Mache R."/>
            <person name="Raynal M."/>
            <person name="Cooke R."/>
            <person name="Grellet F."/>
            <person name="Delseny M."/>
            <person name="Parmentier Y."/>
            <person name="de Marcillac G."/>
            <person name="Gigot C."/>
            <person name="Fleck J."/>
            <person name="Philipps G."/>
            <person name="Axelos M."/>
            <person name="Bardet C."/>
            <person name="Tremousaygue D."/>
            <person name="Lescure B."/>
        </authorList>
    </citation>
    <scope>NUCLEOTIDE SEQUENCE [LARGE SCALE MRNA] OF 1-82 (ISOFORM 1)</scope>
    <source>
        <strain>cv. Columbia</strain>
    </source>
</reference>
<reference key="8">
    <citation type="journal article" date="2006" name="Plant J.">
        <title>AtCHIP functions as an E3 ubiquitin ligase of protein phosphatase 2A subunits and alters plant response to abscisic acid treatment.</title>
        <authorList>
            <person name="Luo J."/>
            <person name="Shen G."/>
            <person name="Yan J."/>
            <person name="He C."/>
            <person name="Zhang H."/>
        </authorList>
    </citation>
    <scope>INTERACTION WITH CHIP</scope>
</reference>
<comment type="function">
    <text>Accepts the ubiquitin-like protein SUMO/SMT3 from the E1 complex and catalyzes its covalent attachment to other proteins. Mediates the selective degradation of short-lived and abnormal proteins.</text>
</comment>
<comment type="pathway">
    <text>Protein modification; protein sumoylation.</text>
</comment>
<comment type="subunit">
    <text evidence="4">Interacts with CHIP.</text>
</comment>
<comment type="alternative products">
    <event type="alternative splicing"/>
    <isoform>
        <id>P35132-1</id>
        <name>1</name>
        <sequence type="displayed"/>
    </isoform>
    <isoform>
        <id>P35132-2</id>
        <name>2</name>
        <sequence type="described" ref="VSP_008896"/>
    </isoform>
</comment>
<comment type="tissue specificity">
    <text evidence="3">Highest expression in young stems and old leaves. Lowest levels in floral buds, anthers and young leaves.</text>
</comment>
<comment type="developmental stage">
    <text evidence="5">Up-regulated during senescence, but not during the G0 to S phase transition.</text>
</comment>
<comment type="induction">
    <text evidence="5">Not induced by heat shock or wounding.</text>
</comment>
<comment type="similarity">
    <text evidence="1">Belongs to the ubiquitin-conjugating enzyme family.</text>
</comment>
<name>UBC9_ARATH</name>
<proteinExistence type="evidence at protein level"/>
<gene>
    <name type="primary">UBC9</name>
    <name type="synonym">UBC4B</name>
    <name type="ordered locus">At4g27960</name>
    <name type="ORF">T13J8.70</name>
</gene>
<evidence type="ECO:0000255" key="1">
    <source>
        <dbReference type="PROSITE-ProRule" id="PRU00388"/>
    </source>
</evidence>
<evidence type="ECO:0000255" key="2">
    <source>
        <dbReference type="PROSITE-ProRule" id="PRU10133"/>
    </source>
</evidence>
<evidence type="ECO:0000269" key="3">
    <source>
    </source>
</evidence>
<evidence type="ECO:0000269" key="4">
    <source>
    </source>
</evidence>
<evidence type="ECO:0000269" key="5">
    <source>
    </source>
</evidence>
<evidence type="ECO:0000303" key="6">
    <source>
    </source>
</evidence>
<evidence type="ECO:0000303" key="7">
    <source>
    </source>
</evidence>
<evidence type="ECO:0000305" key="8"/>
<organism>
    <name type="scientific">Arabidopsis thaliana</name>
    <name type="common">Mouse-ear cress</name>
    <dbReference type="NCBI Taxonomy" id="3702"/>
    <lineage>
        <taxon>Eukaryota</taxon>
        <taxon>Viridiplantae</taxon>
        <taxon>Streptophyta</taxon>
        <taxon>Embryophyta</taxon>
        <taxon>Tracheophyta</taxon>
        <taxon>Spermatophyta</taxon>
        <taxon>Magnoliopsida</taxon>
        <taxon>eudicotyledons</taxon>
        <taxon>Gunneridae</taxon>
        <taxon>Pentapetalae</taxon>
        <taxon>rosids</taxon>
        <taxon>malvids</taxon>
        <taxon>Brassicales</taxon>
        <taxon>Brassicaceae</taxon>
        <taxon>Camelineae</taxon>
        <taxon>Arabidopsis</taxon>
    </lineage>
</organism>
<dbReference type="EC" id="2.3.2.-"/>
<dbReference type="EMBL" id="Z14990">
    <property type="protein sequence ID" value="CAA78714.1"/>
    <property type="molecule type" value="mRNA"/>
</dbReference>
<dbReference type="EMBL" id="X72626">
    <property type="protein sequence ID" value="CAA51201.1"/>
    <property type="molecule type" value="mRNA"/>
</dbReference>
<dbReference type="EMBL" id="L00639">
    <property type="protein sequence ID" value="AAA32894.1"/>
    <property type="molecule type" value="mRNA"/>
</dbReference>
<dbReference type="EMBL" id="DQ027023">
    <property type="protein sequence ID" value="AAY44849.1"/>
    <property type="molecule type" value="mRNA"/>
</dbReference>
<dbReference type="EMBL" id="AL035524">
    <property type="protein sequence ID" value="CAB36765.1"/>
    <property type="molecule type" value="Genomic_DNA"/>
</dbReference>
<dbReference type="EMBL" id="AL161572">
    <property type="protein sequence ID" value="CAB79598.1"/>
    <property type="molecule type" value="Genomic_DNA"/>
</dbReference>
<dbReference type="EMBL" id="CP002687">
    <property type="protein sequence ID" value="AEE85413.1"/>
    <property type="molecule type" value="Genomic_DNA"/>
</dbReference>
<dbReference type="EMBL" id="AF325019">
    <property type="protein sequence ID" value="AAG40371.1"/>
    <property type="molecule type" value="mRNA"/>
</dbReference>
<dbReference type="EMBL" id="AY080741">
    <property type="protein sequence ID" value="AAL85988.1"/>
    <property type="molecule type" value="mRNA"/>
</dbReference>
<dbReference type="EMBL" id="AY142644">
    <property type="protein sequence ID" value="AAN13102.1"/>
    <property type="molecule type" value="mRNA"/>
</dbReference>
<dbReference type="EMBL" id="Z18473">
    <property type="protein sequence ID" value="CAA79198.1"/>
    <property type="molecule type" value="mRNA"/>
</dbReference>
<dbReference type="PIR" id="S32674">
    <property type="entry name" value="S32674"/>
</dbReference>
<dbReference type="RefSeq" id="NP_567791.1">
    <property type="nucleotide sequence ID" value="NM_118934.3"/>
</dbReference>
<dbReference type="RefSeq" id="NP_849462.1">
    <molecule id="P35132-1"/>
    <property type="nucleotide sequence ID" value="NM_179131.3"/>
</dbReference>
<dbReference type="SMR" id="P35132"/>
<dbReference type="BioGRID" id="14196">
    <property type="interactions" value="15"/>
</dbReference>
<dbReference type="FunCoup" id="P35132">
    <property type="interactions" value="3611"/>
</dbReference>
<dbReference type="IntAct" id="P35132">
    <property type="interactions" value="7"/>
</dbReference>
<dbReference type="STRING" id="3702.P35132"/>
<dbReference type="PaxDb" id="3702-AT4G27960.2"/>
<dbReference type="EnsemblPlants" id="AT4G27960.1">
    <molecule id="P35132-1"/>
    <property type="protein sequence ID" value="AT4G27960.1"/>
    <property type="gene ID" value="AT4G27960"/>
</dbReference>
<dbReference type="GeneID" id="828909"/>
<dbReference type="Gramene" id="AT4G27960.1">
    <molecule id="P35132-1"/>
    <property type="protein sequence ID" value="AT4G27960.1"/>
    <property type="gene ID" value="AT4G27960"/>
</dbReference>
<dbReference type="KEGG" id="ath:AT4G27960"/>
<dbReference type="Araport" id="AT4G27960"/>
<dbReference type="TAIR" id="AT4G27960">
    <property type="gene designation" value="UBC9"/>
</dbReference>
<dbReference type="eggNOG" id="KOG0417">
    <property type="taxonomic scope" value="Eukaryota"/>
</dbReference>
<dbReference type="HOGENOM" id="CLU_030988_13_3_1"/>
<dbReference type="InParanoid" id="P35132"/>
<dbReference type="OMA" id="HPNINDR"/>
<dbReference type="OrthoDB" id="581474at2759"/>
<dbReference type="PhylomeDB" id="P35132"/>
<dbReference type="UniPathway" id="UPA00886"/>
<dbReference type="PRO" id="PR:P35132"/>
<dbReference type="Proteomes" id="UP000006548">
    <property type="component" value="Chromosome 4"/>
</dbReference>
<dbReference type="ExpressionAtlas" id="P35132">
    <property type="expression patterns" value="baseline and differential"/>
</dbReference>
<dbReference type="GO" id="GO:0005524">
    <property type="term" value="F:ATP binding"/>
    <property type="evidence" value="ECO:0007669"/>
    <property type="project" value="UniProtKB-KW"/>
</dbReference>
<dbReference type="GO" id="GO:0016740">
    <property type="term" value="F:transferase activity"/>
    <property type="evidence" value="ECO:0007669"/>
    <property type="project" value="UniProtKB-KW"/>
</dbReference>
<dbReference type="GO" id="GO:0016925">
    <property type="term" value="P:protein sumoylation"/>
    <property type="evidence" value="ECO:0007669"/>
    <property type="project" value="UniProtKB-UniPathway"/>
</dbReference>
<dbReference type="CDD" id="cd23792">
    <property type="entry name" value="UBCc_UBE2D"/>
    <property type="match status" value="1"/>
</dbReference>
<dbReference type="FunFam" id="3.10.110.10:FF:000001">
    <property type="entry name" value="Ubiquitin-conjugating enzyme 28, E2"/>
    <property type="match status" value="1"/>
</dbReference>
<dbReference type="Gene3D" id="3.10.110.10">
    <property type="entry name" value="Ubiquitin Conjugating Enzyme"/>
    <property type="match status" value="1"/>
</dbReference>
<dbReference type="InterPro" id="IPR000608">
    <property type="entry name" value="UBQ-conjugat_E2_core"/>
</dbReference>
<dbReference type="InterPro" id="IPR023313">
    <property type="entry name" value="UBQ-conjugating_AS"/>
</dbReference>
<dbReference type="InterPro" id="IPR016135">
    <property type="entry name" value="UBQ-conjugating_enzyme/RWD"/>
</dbReference>
<dbReference type="PANTHER" id="PTHR24068">
    <property type="entry name" value="UBIQUITIN-CONJUGATING ENZYME E2"/>
    <property type="match status" value="1"/>
</dbReference>
<dbReference type="Pfam" id="PF00179">
    <property type="entry name" value="UQ_con"/>
    <property type="match status" value="1"/>
</dbReference>
<dbReference type="SMART" id="SM00212">
    <property type="entry name" value="UBCc"/>
    <property type="match status" value="1"/>
</dbReference>
<dbReference type="SUPFAM" id="SSF54495">
    <property type="entry name" value="UBC-like"/>
    <property type="match status" value="1"/>
</dbReference>
<dbReference type="PROSITE" id="PS00183">
    <property type="entry name" value="UBC_1"/>
    <property type="match status" value="1"/>
</dbReference>
<dbReference type="PROSITE" id="PS50127">
    <property type="entry name" value="UBC_2"/>
    <property type="match status" value="1"/>
</dbReference>
<keyword id="KW-0025">Alternative splicing</keyword>
<keyword id="KW-0067">ATP-binding</keyword>
<keyword id="KW-0547">Nucleotide-binding</keyword>
<keyword id="KW-1185">Reference proteome</keyword>
<keyword id="KW-0808">Transferase</keyword>
<keyword id="KW-0833">Ubl conjugation pathway</keyword>
<protein>
    <recommendedName>
        <fullName>SUMO-conjugating enzyme UBC9</fullName>
        <ecNumber>2.3.2.-</ecNumber>
    </recommendedName>
    <alternativeName>
        <fullName>RING-type E3 SUMO transferase UBC9</fullName>
    </alternativeName>
    <alternativeName>
        <fullName>UBCAT4B</fullName>
    </alternativeName>
    <alternativeName>
        <fullName>Ubiquitin carrier protein 9</fullName>
    </alternativeName>
    <alternativeName>
        <fullName>Ubiquitin-conjugating enzyme E2 9</fullName>
    </alternativeName>
    <alternativeName>
        <fullName>Ubiquitin-conjugating enzyme E2-17 kDa</fullName>
    </alternativeName>
    <alternativeName>
        <fullName>Ubiquitin-protein ligase 9</fullName>
    </alternativeName>
</protein>